<proteinExistence type="inferred from homology"/>
<name>RSEP_SALTY</name>
<dbReference type="EC" id="3.4.24.-"/>
<dbReference type="EMBL" id="AE006468">
    <property type="protein sequence ID" value="AAL19187.1"/>
    <property type="molecule type" value="Genomic_DNA"/>
</dbReference>
<dbReference type="RefSeq" id="WP_000949017.1">
    <property type="nucleotide sequence ID" value="NC_003197.2"/>
</dbReference>
<dbReference type="SMR" id="Q8ZRP1"/>
<dbReference type="STRING" id="99287.STM0223"/>
<dbReference type="MEROPS" id="M50.004"/>
<dbReference type="PaxDb" id="99287-STM0223"/>
<dbReference type="KEGG" id="stm:STM0223"/>
<dbReference type="PATRIC" id="fig|99287.12.peg.236"/>
<dbReference type="HOGENOM" id="CLU_025778_0_2_6"/>
<dbReference type="OMA" id="EYGHFWA"/>
<dbReference type="PhylomeDB" id="Q8ZRP1"/>
<dbReference type="BioCyc" id="SENT99287:STM0223-MONOMER"/>
<dbReference type="Proteomes" id="UP000001014">
    <property type="component" value="Chromosome"/>
</dbReference>
<dbReference type="GO" id="GO:0005886">
    <property type="term" value="C:plasma membrane"/>
    <property type="evidence" value="ECO:0007669"/>
    <property type="project" value="UniProtKB-SubCell"/>
</dbReference>
<dbReference type="GO" id="GO:0046872">
    <property type="term" value="F:metal ion binding"/>
    <property type="evidence" value="ECO:0007669"/>
    <property type="project" value="UniProtKB-KW"/>
</dbReference>
<dbReference type="GO" id="GO:0004222">
    <property type="term" value="F:metalloendopeptidase activity"/>
    <property type="evidence" value="ECO:0007669"/>
    <property type="project" value="InterPro"/>
</dbReference>
<dbReference type="GO" id="GO:0006508">
    <property type="term" value="P:proteolysis"/>
    <property type="evidence" value="ECO:0007669"/>
    <property type="project" value="UniProtKB-KW"/>
</dbReference>
<dbReference type="CDD" id="cd23082">
    <property type="entry name" value="cpPDZ1_EcRseP-like"/>
    <property type="match status" value="1"/>
</dbReference>
<dbReference type="CDD" id="cd23083">
    <property type="entry name" value="cpPDZ2_EcRseP-like"/>
    <property type="match status" value="1"/>
</dbReference>
<dbReference type="CDD" id="cd06163">
    <property type="entry name" value="S2P-M50_PDZ_RseP-like"/>
    <property type="match status" value="1"/>
</dbReference>
<dbReference type="FunFam" id="2.30.42.10:FF:000094">
    <property type="entry name" value="Zinc metalloprotease"/>
    <property type="match status" value="1"/>
</dbReference>
<dbReference type="FunFam" id="2.30.42.10:FF:000095">
    <property type="entry name" value="Zinc metalloprotease"/>
    <property type="match status" value="1"/>
</dbReference>
<dbReference type="Gene3D" id="2.30.42.10">
    <property type="match status" value="2"/>
</dbReference>
<dbReference type="InterPro" id="IPR001478">
    <property type="entry name" value="PDZ"/>
</dbReference>
<dbReference type="InterPro" id="IPR041489">
    <property type="entry name" value="PDZ_6"/>
</dbReference>
<dbReference type="InterPro" id="IPR036034">
    <property type="entry name" value="PDZ_sf"/>
</dbReference>
<dbReference type="InterPro" id="IPR004387">
    <property type="entry name" value="Pept_M50_Zn"/>
</dbReference>
<dbReference type="InterPro" id="IPR008915">
    <property type="entry name" value="Peptidase_M50"/>
</dbReference>
<dbReference type="NCBIfam" id="NF008046">
    <property type="entry name" value="PRK10779.1"/>
    <property type="match status" value="1"/>
</dbReference>
<dbReference type="NCBIfam" id="TIGR00054">
    <property type="entry name" value="RIP metalloprotease RseP"/>
    <property type="match status" value="1"/>
</dbReference>
<dbReference type="PANTHER" id="PTHR42837:SF2">
    <property type="entry name" value="MEMBRANE METALLOPROTEASE ARASP2, CHLOROPLASTIC-RELATED"/>
    <property type="match status" value="1"/>
</dbReference>
<dbReference type="PANTHER" id="PTHR42837">
    <property type="entry name" value="REGULATOR OF SIGMA-E PROTEASE RSEP"/>
    <property type="match status" value="1"/>
</dbReference>
<dbReference type="Pfam" id="PF17820">
    <property type="entry name" value="PDZ_6"/>
    <property type="match status" value="1"/>
</dbReference>
<dbReference type="Pfam" id="PF02163">
    <property type="entry name" value="Peptidase_M50"/>
    <property type="match status" value="1"/>
</dbReference>
<dbReference type="SMART" id="SM00228">
    <property type="entry name" value="PDZ"/>
    <property type="match status" value="2"/>
</dbReference>
<dbReference type="SUPFAM" id="SSF50156">
    <property type="entry name" value="PDZ domain-like"/>
    <property type="match status" value="2"/>
</dbReference>
<dbReference type="PROSITE" id="PS50106">
    <property type="entry name" value="PDZ"/>
    <property type="match status" value="1"/>
</dbReference>
<dbReference type="PROSITE" id="PS00142">
    <property type="entry name" value="ZINC_PROTEASE"/>
    <property type="match status" value="1"/>
</dbReference>
<comment type="function">
    <text evidence="1">A site-2 regulated intramembrane protease (S2P) that cleaves the peptide bond between 'Ala-108' and 'Cys-109' in the transmembrane region of RseA. Part of a regulated intramembrane proteolysis (RIP) cascade. Acts on DegS-cleaved RseA to release the cytoplasmic domain of RseA. This provides the cell with sigma-E (RpoE) activity through the proteolysis of RseA (By similarity).</text>
</comment>
<comment type="cofactor">
    <cofactor evidence="1">
        <name>Zn(2+)</name>
        <dbReference type="ChEBI" id="CHEBI:29105"/>
    </cofactor>
</comment>
<comment type="subunit">
    <text evidence="1">Interacts with RseA.</text>
</comment>
<comment type="subcellular location">
    <subcellularLocation>
        <location evidence="1">Cell inner membrane</location>
        <topology evidence="1">Multi-pass membrane protein</topology>
    </subcellularLocation>
</comment>
<comment type="domain">
    <text evidence="1">The 2 circularly premutated PDZ domains act to negatively regulate protease action on intact RseA.</text>
</comment>
<comment type="miscellaneous">
    <text evidence="1">Regulated intramembrane proteolysis (RIP) occurs when an extracytoplasmic signal triggers a concerted proteolytic cascade to transmit information and elicit cellular responses. A membrane-spanning regulatory substrate protein is first cut extracytoplasmically (site-1 protease, S1P), then within the membrane itself (site-2 protease, S2P, this enzyme), while cytoplasmic proteases finish degrading the regulatory protein, liberating the effector protein (By similarity).</text>
</comment>
<comment type="similarity">
    <text evidence="5">Belongs to the peptidase M50B family.</text>
</comment>
<accession>Q8ZRP1</accession>
<reference key="1">
    <citation type="journal article" date="2001" name="Nature">
        <title>Complete genome sequence of Salmonella enterica serovar Typhimurium LT2.</title>
        <authorList>
            <person name="McClelland M."/>
            <person name="Sanderson K.E."/>
            <person name="Spieth J."/>
            <person name="Clifton S.W."/>
            <person name="Latreille P."/>
            <person name="Courtney L."/>
            <person name="Porwollik S."/>
            <person name="Ali J."/>
            <person name="Dante M."/>
            <person name="Du F."/>
            <person name="Hou S."/>
            <person name="Layman D."/>
            <person name="Leonard S."/>
            <person name="Nguyen C."/>
            <person name="Scott K."/>
            <person name="Holmes A."/>
            <person name="Grewal N."/>
            <person name="Mulvaney E."/>
            <person name="Ryan E."/>
            <person name="Sun H."/>
            <person name="Florea L."/>
            <person name="Miller W."/>
            <person name="Stoneking T."/>
            <person name="Nhan M."/>
            <person name="Waterston R."/>
            <person name="Wilson R.K."/>
        </authorList>
    </citation>
    <scope>NUCLEOTIDE SEQUENCE [LARGE SCALE GENOMIC DNA]</scope>
    <source>
        <strain>LT2 / SGSC1412 / ATCC 700720</strain>
    </source>
</reference>
<protein>
    <recommendedName>
        <fullName>Regulator of sigma E protease</fullName>
        <ecNumber>3.4.24.-</ecNumber>
    </recommendedName>
    <alternativeName>
        <fullName>S2P endopeptidase</fullName>
    </alternativeName>
    <alternativeName>
        <fullName>Site-2 protease RseP</fullName>
        <shortName>S2P protease RseP</shortName>
    </alternativeName>
    <alternativeName>
        <fullName>Site-2-type intramembrane protease</fullName>
    </alternativeName>
</protein>
<evidence type="ECO:0000250" key="1"/>
<evidence type="ECO:0000255" key="2"/>
<evidence type="ECO:0000255" key="3">
    <source>
        <dbReference type="PROSITE-ProRule" id="PRU00143"/>
    </source>
</evidence>
<evidence type="ECO:0000255" key="4">
    <source>
        <dbReference type="PROSITE-ProRule" id="PRU10095"/>
    </source>
</evidence>
<evidence type="ECO:0000305" key="5"/>
<feature type="chain" id="PRO_0000088421" description="Regulator of sigma E protease">
    <location>
        <begin position="1"/>
        <end position="450"/>
    </location>
</feature>
<feature type="transmembrane region" description="Helical" evidence="2">
    <location>
        <begin position="98"/>
        <end position="120"/>
    </location>
</feature>
<feature type="transmembrane region" description="Helical" evidence="2">
    <location>
        <begin position="376"/>
        <end position="398"/>
    </location>
</feature>
<feature type="transmembrane region" description="Helical" evidence="2">
    <location>
        <begin position="426"/>
        <end position="445"/>
    </location>
</feature>
<feature type="domain" description="PDZ 1" evidence="3">
    <location>
        <begin position="115"/>
        <end position="186"/>
    </location>
</feature>
<feature type="domain" description="PDZ 2" evidence="3">
    <location>
        <begin position="199"/>
        <end position="291"/>
    </location>
</feature>
<feature type="active site" evidence="4">
    <location>
        <position position="23"/>
    </location>
</feature>
<feature type="binding site" evidence="4">
    <location>
        <position position="22"/>
    </location>
    <ligand>
        <name>Zn(2+)</name>
        <dbReference type="ChEBI" id="CHEBI:29105"/>
        <note>catalytic</note>
    </ligand>
</feature>
<feature type="binding site" evidence="4">
    <location>
        <position position="26"/>
    </location>
    <ligand>
        <name>Zn(2+)</name>
        <dbReference type="ChEBI" id="CHEBI:29105"/>
        <note>catalytic</note>
    </ligand>
</feature>
<gene>
    <name type="primary">rseP</name>
    <name type="ordered locus">STM0223</name>
</gene>
<sequence length="450" mass="49184">MLSILWNLAAFIIALGVLITVHEFGHFWVARRCGVRVERFSIGFGKALWRRTDRYGTEYVIALIPLGGYVKMLDERAEPVAPELRRHAFNNKTVGQRAAIIAAGPVANFIFAIFAYWLVFIIGVPGVRPVIGEITPNSIAAQAQIAPGTELKAVDGIETPDWDAVRLQLVSKIGDQQTTVSVAPFGSDQRQDKTLDLRHWAFEPDKQDPVSSLGIRPRGPQIEPVLSEVQANSAASKAGLQAGDRIVKVDGQPLTQWMKFVTFVRDNPGKPLALEIERQGSALSLTLTPDTKSVNGKAEGFAGVVPKIIPLPEEYKTIRQYGPFSAILEATDKTWQLMKLTVSMLGKLITGDVKLNNLSGPISIAQGAGMSAEFGVIYYLMFLALISVNLGIINLFPLPVLDGGHLLFLAIEKLKGGPVSERVQDFSYRIGSILLVLLMGLALFNDFSRL</sequence>
<organism>
    <name type="scientific">Salmonella typhimurium (strain LT2 / SGSC1412 / ATCC 700720)</name>
    <dbReference type="NCBI Taxonomy" id="99287"/>
    <lineage>
        <taxon>Bacteria</taxon>
        <taxon>Pseudomonadati</taxon>
        <taxon>Pseudomonadota</taxon>
        <taxon>Gammaproteobacteria</taxon>
        <taxon>Enterobacterales</taxon>
        <taxon>Enterobacteriaceae</taxon>
        <taxon>Salmonella</taxon>
    </lineage>
</organism>
<keyword id="KW-0997">Cell inner membrane</keyword>
<keyword id="KW-1003">Cell membrane</keyword>
<keyword id="KW-0378">Hydrolase</keyword>
<keyword id="KW-0472">Membrane</keyword>
<keyword id="KW-0479">Metal-binding</keyword>
<keyword id="KW-0482">Metalloprotease</keyword>
<keyword id="KW-0645">Protease</keyword>
<keyword id="KW-1185">Reference proteome</keyword>
<keyword id="KW-0677">Repeat</keyword>
<keyword id="KW-0812">Transmembrane</keyword>
<keyword id="KW-1133">Transmembrane helix</keyword>
<keyword id="KW-0862">Zinc</keyword>